<gene>
    <name type="ordered locus">RF_0092</name>
</gene>
<evidence type="ECO:0000255" key="1"/>
<evidence type="ECO:0000256" key="2">
    <source>
        <dbReference type="SAM" id="MobiDB-lite"/>
    </source>
</evidence>
<evidence type="ECO:0000305" key="3"/>
<feature type="signal peptide" evidence="1">
    <location>
        <begin position="1"/>
        <end position="20"/>
    </location>
</feature>
<feature type="chain" id="PRO_0000269224" description="Uncharacterized protein RF_0092">
    <location>
        <begin position="21"/>
        <end position="890"/>
    </location>
</feature>
<feature type="transmembrane region" description="Helical" evidence="1">
    <location>
        <begin position="518"/>
        <end position="538"/>
    </location>
</feature>
<feature type="transmembrane region" description="Helical" evidence="1">
    <location>
        <begin position="567"/>
        <end position="587"/>
    </location>
</feature>
<feature type="transmembrane region" description="Helical" evidence="1">
    <location>
        <begin position="613"/>
        <end position="633"/>
    </location>
</feature>
<feature type="transmembrane region" description="Helical" evidence="1">
    <location>
        <begin position="651"/>
        <end position="671"/>
    </location>
</feature>
<feature type="transmembrane region" description="Helical" evidence="1">
    <location>
        <begin position="684"/>
        <end position="704"/>
    </location>
</feature>
<feature type="transmembrane region" description="Helical" evidence="1">
    <location>
        <begin position="775"/>
        <end position="795"/>
    </location>
</feature>
<feature type="region of interest" description="Disordered" evidence="2">
    <location>
        <begin position="860"/>
        <end position="890"/>
    </location>
</feature>
<feature type="compositionally biased region" description="Basic and acidic residues" evidence="2">
    <location>
        <begin position="862"/>
        <end position="890"/>
    </location>
</feature>
<accession>Q4UNB5</accession>
<sequence>MKILKSLVLLVLFMAMPAKADDAFSWMSTSFGGLKSLFGCLEVPEFTSFKEGNIGISLSTAGTWQSTGNSVEKGKLLKINWSTSGITPEPRKYLVLYRIDPRFSTPQVFIKTYNYSKLQFEALGFPRFVTDNNSATPGAIPPDKDLDALSFTKMSDSVKYFNYSNGNSRIEVKAGDVVNISLVGKDNFFSPNTLDNILTQELDSSIFAASALYTQSNLGNFDNRIIYSSAKEVCDLIDASRDPDKPSGCSGTGSATKYKSINSNEALVGKPMITRAVQNFMGLINSCPANAGINTSPACYYDQGRGMIIKVGGQVIKERDQSFVNSGSTQSSFIYYQATSGGTMDFTSDWQVNNMFSNSVLMSDWSRNFSNYANFVDYINKNDWSANFLYFGRYSMIVEIGNGANSINPGDQQNISLEYLITSDGTLPDPSVRGTPVDYNFAADAPQDGYLWLRVVNPNSNIQGVVSVNYANYTGTTWFSDIIYNGAIKPITDQFRTFSQNFYIKLVKNSAVQNIAKAALTLYVTIFGLMFVAGALKLTAVEVITRICKIAIVAFLIREESWSFFNTYFFSAFTNGIDFFVTNVVGATSSRANIFGFIDPIFDKYTNGRIWGLLFIELLQIHNGLAFIAIITIYSLITYFRAILEVIIGYVIAFIGLTVMISLAPFFIILMLFEKTKSLFDNWISTLLSYVVQPTILLIFFLLIDQVLSEQLLKVVVRACWDTLIPIKIGLDLTNLGIPINFSFTLPFLPGIPFYVPDVPEISSSNILTNKANTFLVLFTTALLFYSYCLMSYGLVTFVNIVVGMLTNVTPARISGNYQERSDPVGAVMQDIGSVTKPIKKAAMAPARVFKDKIIDQNYKARKPEGGEHTNKFLAERNDVPKKEEGERKE</sequence>
<protein>
    <recommendedName>
        <fullName>Uncharacterized protein RF_0092</fullName>
    </recommendedName>
</protein>
<comment type="subcellular location">
    <subcellularLocation>
        <location evidence="3">Cell membrane</location>
        <topology evidence="3">Multi-pass membrane protein</topology>
    </subcellularLocation>
</comment>
<comment type="similarity">
    <text evidence="3">Belongs to the TrbL/VirB6 family.</text>
</comment>
<name>Y092_RICFE</name>
<reference key="1">
    <citation type="journal article" date="2005" name="PLoS Biol.">
        <title>The genome sequence of Rickettsia felis identifies the first putative conjugative plasmid in an obligate intracellular parasite.</title>
        <authorList>
            <person name="Ogata H."/>
            <person name="Renesto P."/>
            <person name="Audic S."/>
            <person name="Robert C."/>
            <person name="Blanc G."/>
            <person name="Fournier P.-E."/>
            <person name="Parinello H."/>
            <person name="Claverie J.-M."/>
            <person name="Raoult D."/>
        </authorList>
    </citation>
    <scope>NUCLEOTIDE SEQUENCE [LARGE SCALE GENOMIC DNA]</scope>
    <source>
        <strain>ATCC VR-1525 / URRWXCal2</strain>
    </source>
</reference>
<organism>
    <name type="scientific">Rickettsia felis (strain ATCC VR-1525 / URRWXCal2)</name>
    <name type="common">Rickettsia azadi</name>
    <dbReference type="NCBI Taxonomy" id="315456"/>
    <lineage>
        <taxon>Bacteria</taxon>
        <taxon>Pseudomonadati</taxon>
        <taxon>Pseudomonadota</taxon>
        <taxon>Alphaproteobacteria</taxon>
        <taxon>Rickettsiales</taxon>
        <taxon>Rickettsiaceae</taxon>
        <taxon>Rickettsieae</taxon>
        <taxon>Rickettsia</taxon>
        <taxon>spotted fever group</taxon>
    </lineage>
</organism>
<keyword id="KW-1003">Cell membrane</keyword>
<keyword id="KW-0472">Membrane</keyword>
<keyword id="KW-0732">Signal</keyword>
<keyword id="KW-0812">Transmembrane</keyword>
<keyword id="KW-1133">Transmembrane helix</keyword>
<dbReference type="EMBL" id="CP000053">
    <property type="protein sequence ID" value="AAY60943.1"/>
    <property type="molecule type" value="Genomic_DNA"/>
</dbReference>
<dbReference type="STRING" id="315456.RF_0092"/>
<dbReference type="KEGG" id="rfe:RF_0092"/>
<dbReference type="eggNOG" id="COG3704">
    <property type="taxonomic scope" value="Bacteria"/>
</dbReference>
<dbReference type="HOGENOM" id="CLU_327573_0_0_5"/>
<dbReference type="OrthoDB" id="7164976at2"/>
<dbReference type="Proteomes" id="UP000008548">
    <property type="component" value="Chromosome"/>
</dbReference>
<dbReference type="GO" id="GO:0005886">
    <property type="term" value="C:plasma membrane"/>
    <property type="evidence" value="ECO:0007669"/>
    <property type="project" value="UniProtKB-SubCell"/>
</dbReference>
<dbReference type="GO" id="GO:0030255">
    <property type="term" value="P:protein secretion by the type IV secretion system"/>
    <property type="evidence" value="ECO:0007669"/>
    <property type="project" value="InterPro"/>
</dbReference>
<dbReference type="InterPro" id="IPR007688">
    <property type="entry name" value="Conjugal_tfr_TrbL/VirB6"/>
</dbReference>
<dbReference type="Pfam" id="PF04610">
    <property type="entry name" value="TrbL"/>
    <property type="match status" value="1"/>
</dbReference>
<proteinExistence type="inferred from homology"/>